<dbReference type="EMBL" id="CP001407">
    <property type="protein sequence ID" value="ACO29226.1"/>
    <property type="molecule type" value="Genomic_DNA"/>
</dbReference>
<dbReference type="RefSeq" id="WP_001125945.1">
    <property type="nucleotide sequence ID" value="NZ_CP009318.1"/>
</dbReference>
<dbReference type="SMR" id="C1EUR8"/>
<dbReference type="GeneID" id="93006536"/>
<dbReference type="KEGG" id="bcx:BCA_4683"/>
<dbReference type="PATRIC" id="fig|572264.18.peg.4632"/>
<dbReference type="Proteomes" id="UP000002210">
    <property type="component" value="Chromosome"/>
</dbReference>
<dbReference type="GO" id="GO:0022625">
    <property type="term" value="C:cytosolic large ribosomal subunit"/>
    <property type="evidence" value="ECO:0007669"/>
    <property type="project" value="TreeGrafter"/>
</dbReference>
<dbReference type="GO" id="GO:0003735">
    <property type="term" value="F:structural constituent of ribosome"/>
    <property type="evidence" value="ECO:0007669"/>
    <property type="project" value="InterPro"/>
</dbReference>
<dbReference type="GO" id="GO:0006412">
    <property type="term" value="P:translation"/>
    <property type="evidence" value="ECO:0007669"/>
    <property type="project" value="UniProtKB-UniRule"/>
</dbReference>
<dbReference type="FunFam" id="4.10.410.60:FF:000001">
    <property type="entry name" value="50S ribosomal protein L35"/>
    <property type="match status" value="1"/>
</dbReference>
<dbReference type="Gene3D" id="4.10.410.60">
    <property type="match status" value="1"/>
</dbReference>
<dbReference type="HAMAP" id="MF_00514">
    <property type="entry name" value="Ribosomal_bL35"/>
    <property type="match status" value="1"/>
</dbReference>
<dbReference type="InterPro" id="IPR001706">
    <property type="entry name" value="Ribosomal_bL35"/>
</dbReference>
<dbReference type="InterPro" id="IPR021137">
    <property type="entry name" value="Ribosomal_bL35-like"/>
</dbReference>
<dbReference type="InterPro" id="IPR018265">
    <property type="entry name" value="Ribosomal_bL35_CS"/>
</dbReference>
<dbReference type="InterPro" id="IPR037229">
    <property type="entry name" value="Ribosomal_bL35_sf"/>
</dbReference>
<dbReference type="NCBIfam" id="TIGR00001">
    <property type="entry name" value="rpmI_bact"/>
    <property type="match status" value="1"/>
</dbReference>
<dbReference type="PANTHER" id="PTHR33343">
    <property type="entry name" value="54S RIBOSOMAL PROTEIN BL35M"/>
    <property type="match status" value="1"/>
</dbReference>
<dbReference type="PANTHER" id="PTHR33343:SF1">
    <property type="entry name" value="LARGE RIBOSOMAL SUBUNIT PROTEIN BL35M"/>
    <property type="match status" value="1"/>
</dbReference>
<dbReference type="Pfam" id="PF01632">
    <property type="entry name" value="Ribosomal_L35p"/>
    <property type="match status" value="1"/>
</dbReference>
<dbReference type="PRINTS" id="PR00064">
    <property type="entry name" value="RIBOSOMALL35"/>
</dbReference>
<dbReference type="SUPFAM" id="SSF143034">
    <property type="entry name" value="L35p-like"/>
    <property type="match status" value="1"/>
</dbReference>
<dbReference type="PROSITE" id="PS00936">
    <property type="entry name" value="RIBOSOMAL_L35"/>
    <property type="match status" value="1"/>
</dbReference>
<comment type="similarity">
    <text evidence="1">Belongs to the bacterial ribosomal protein bL35 family.</text>
</comment>
<name>RL35_BACC3</name>
<accession>C1EUR8</accession>
<reference key="1">
    <citation type="submission" date="2009-02" db="EMBL/GenBank/DDBJ databases">
        <title>Genome sequence of Bacillus cereus 03BB102.</title>
        <authorList>
            <person name="Dodson R.J."/>
            <person name="Jackson P."/>
            <person name="Munk A.C."/>
            <person name="Brettin T."/>
            <person name="Bruce D."/>
            <person name="Detter C."/>
            <person name="Tapia R."/>
            <person name="Han C."/>
            <person name="Sutton G."/>
            <person name="Sims D."/>
        </authorList>
    </citation>
    <scope>NUCLEOTIDE SEQUENCE [LARGE SCALE GENOMIC DNA]</scope>
    <source>
        <strain>03BB102</strain>
    </source>
</reference>
<feature type="chain" id="PRO_1000146120" description="Large ribosomal subunit protein bL35">
    <location>
        <begin position="1"/>
        <end position="66"/>
    </location>
</feature>
<feature type="region of interest" description="Disordered" evidence="2">
    <location>
        <begin position="1"/>
        <end position="26"/>
    </location>
</feature>
<protein>
    <recommendedName>
        <fullName evidence="1">Large ribosomal subunit protein bL35</fullName>
    </recommendedName>
    <alternativeName>
        <fullName evidence="3">50S ribosomal protein L35</fullName>
    </alternativeName>
</protein>
<sequence length="66" mass="7496">MPKQKTHRGAAKRFKKTGSGKLKRSHAYTSHLFANKSTKAKRKLRKAGVVSAGDFKRIRQMLDNLK</sequence>
<gene>
    <name evidence="1" type="primary">rpmI</name>
    <name type="ordered locus">BCA_4683</name>
</gene>
<keyword id="KW-0687">Ribonucleoprotein</keyword>
<keyword id="KW-0689">Ribosomal protein</keyword>
<evidence type="ECO:0000255" key="1">
    <source>
        <dbReference type="HAMAP-Rule" id="MF_00514"/>
    </source>
</evidence>
<evidence type="ECO:0000256" key="2">
    <source>
        <dbReference type="SAM" id="MobiDB-lite"/>
    </source>
</evidence>
<evidence type="ECO:0000305" key="3"/>
<organism>
    <name type="scientific">Bacillus cereus (strain 03BB102)</name>
    <dbReference type="NCBI Taxonomy" id="572264"/>
    <lineage>
        <taxon>Bacteria</taxon>
        <taxon>Bacillati</taxon>
        <taxon>Bacillota</taxon>
        <taxon>Bacilli</taxon>
        <taxon>Bacillales</taxon>
        <taxon>Bacillaceae</taxon>
        <taxon>Bacillus</taxon>
        <taxon>Bacillus cereus group</taxon>
    </lineage>
</organism>
<proteinExistence type="inferred from homology"/>